<feature type="chain" id="PRO_0000197367" description="Metallothionein-2">
    <location>
        <begin position="1"/>
        <end position="54"/>
    </location>
</feature>
<accession>P41928</accession>
<accession>B5RSJ7</accession>
<organism>
    <name type="scientific">Yarrowia lipolytica (strain CLIB 122 / E 150)</name>
    <name type="common">Yeast</name>
    <name type="synonym">Candida lipolytica</name>
    <dbReference type="NCBI Taxonomy" id="284591"/>
    <lineage>
        <taxon>Eukaryota</taxon>
        <taxon>Fungi</taxon>
        <taxon>Dikarya</taxon>
        <taxon>Ascomycota</taxon>
        <taxon>Saccharomycotina</taxon>
        <taxon>Dipodascomycetes</taxon>
        <taxon>Dipodascales</taxon>
        <taxon>Dipodascales incertae sedis</taxon>
        <taxon>Yarrowia</taxon>
    </lineage>
</organism>
<comment type="similarity">
    <text evidence="1">Belongs to the metallothionein superfamily. Type 11 family.</text>
</comment>
<name>MT2_YARLI</name>
<proteinExistence type="inferred from homology"/>
<sequence>MEFTSALFGASLVQSKHKTTKKHNLVDSCCCSKPTEKPTNSCTCSKCACDSCKC</sequence>
<evidence type="ECO:0000305" key="1"/>
<gene>
    <name type="primary">MTP2</name>
    <name type="ordered locus">YALI0A02423g</name>
</gene>
<dbReference type="EMBL" id="Z23264">
    <property type="protein sequence ID" value="CAA80802.1"/>
    <property type="molecule type" value="Genomic_DNA"/>
</dbReference>
<dbReference type="EMBL" id="CR382127">
    <property type="protein sequence ID" value="CAR65182.1"/>
    <property type="molecule type" value="Genomic_DNA"/>
</dbReference>
<dbReference type="RefSeq" id="XP_002142983.1">
    <property type="nucleotide sequence ID" value="XM_002142947.1"/>
</dbReference>
<dbReference type="EnsemblFungi" id="CAR65182">
    <property type="protein sequence ID" value="CAR65182"/>
    <property type="gene ID" value="YALI0_A02423g"/>
</dbReference>
<dbReference type="VEuPathDB" id="FungiDB:YALI0_A02423g"/>
<dbReference type="HOGENOM" id="CLU_3034143_0_0_1"/>
<dbReference type="InParanoid" id="P41928"/>
<dbReference type="Proteomes" id="UP000001300">
    <property type="component" value="Chromosome A"/>
</dbReference>
<dbReference type="GO" id="GO:0005507">
    <property type="term" value="F:copper ion binding"/>
    <property type="evidence" value="ECO:0007669"/>
    <property type="project" value="InterPro"/>
</dbReference>
<dbReference type="InterPro" id="IPR000869">
    <property type="entry name" value="Metalthion_11"/>
</dbReference>
<dbReference type="Pfam" id="PF02066">
    <property type="entry name" value="Metallothio_11"/>
    <property type="match status" value="1"/>
</dbReference>
<dbReference type="PRINTS" id="PR00874">
    <property type="entry name" value="MTFUNGIIV"/>
</dbReference>
<protein>
    <recommendedName>
        <fullName>Metallothionein-2</fullName>
        <shortName>MT-2</shortName>
    </recommendedName>
    <alternativeName>
        <fullName>Metallothionein-II</fullName>
        <shortName>MT-II</shortName>
    </alternativeName>
</protein>
<reference key="1">
    <citation type="thesis" date="1994" institute="University of Salamanca" country="Spain">
        <authorList>
            <person name="Prado M."/>
        </authorList>
    </citation>
    <scope>NUCLEOTIDE SEQUENCE [GENOMIC DNA]</scope>
    <source>
        <strain>ATCC 20460 / W29 / CBS 7504 / IFP29</strain>
    </source>
</reference>
<reference key="2">
    <citation type="journal article" date="2004" name="Nature">
        <title>Genome evolution in yeasts.</title>
        <authorList>
            <person name="Dujon B."/>
            <person name="Sherman D."/>
            <person name="Fischer G."/>
            <person name="Durrens P."/>
            <person name="Casaregola S."/>
            <person name="Lafontaine I."/>
            <person name="de Montigny J."/>
            <person name="Marck C."/>
            <person name="Neuveglise C."/>
            <person name="Talla E."/>
            <person name="Goffard N."/>
            <person name="Frangeul L."/>
            <person name="Aigle M."/>
            <person name="Anthouard V."/>
            <person name="Babour A."/>
            <person name="Barbe V."/>
            <person name="Barnay S."/>
            <person name="Blanchin S."/>
            <person name="Beckerich J.-M."/>
            <person name="Beyne E."/>
            <person name="Bleykasten C."/>
            <person name="Boisrame A."/>
            <person name="Boyer J."/>
            <person name="Cattolico L."/>
            <person name="Confanioleri F."/>
            <person name="de Daruvar A."/>
            <person name="Despons L."/>
            <person name="Fabre E."/>
            <person name="Fairhead C."/>
            <person name="Ferry-Dumazet H."/>
            <person name="Groppi A."/>
            <person name="Hantraye F."/>
            <person name="Hennequin C."/>
            <person name="Jauniaux N."/>
            <person name="Joyet P."/>
            <person name="Kachouri R."/>
            <person name="Kerrest A."/>
            <person name="Koszul R."/>
            <person name="Lemaire M."/>
            <person name="Lesur I."/>
            <person name="Ma L."/>
            <person name="Muller H."/>
            <person name="Nicaud J.-M."/>
            <person name="Nikolski M."/>
            <person name="Oztas S."/>
            <person name="Ozier-Kalogeropoulos O."/>
            <person name="Pellenz S."/>
            <person name="Potier S."/>
            <person name="Richard G.-F."/>
            <person name="Straub M.-L."/>
            <person name="Suleau A."/>
            <person name="Swennen D."/>
            <person name="Tekaia F."/>
            <person name="Wesolowski-Louvel M."/>
            <person name="Westhof E."/>
            <person name="Wirth B."/>
            <person name="Zeniou-Meyer M."/>
            <person name="Zivanovic Y."/>
            <person name="Bolotin-Fukuhara M."/>
            <person name="Thierry A."/>
            <person name="Bouchier C."/>
            <person name="Caudron B."/>
            <person name="Scarpelli C."/>
            <person name="Gaillardin C."/>
            <person name="Weissenbach J."/>
            <person name="Wincker P."/>
            <person name="Souciet J.-L."/>
        </authorList>
    </citation>
    <scope>NUCLEOTIDE SEQUENCE [LARGE SCALE GENOMIC DNA]</scope>
    <source>
        <strain>CLIB 122 / E 150</strain>
    </source>
</reference>
<keyword id="KW-0186">Copper</keyword>
<keyword id="KW-0479">Metal-binding</keyword>
<keyword id="KW-0480">Metal-thiolate cluster</keyword>
<keyword id="KW-1185">Reference proteome</keyword>